<gene>
    <name evidence="1" type="primary">ilvD</name>
</gene>
<proteinExistence type="inferred from homology"/>
<comment type="function">
    <text evidence="1">Functions in the biosynthesis of branched-chain amino acids. Catalyzes the dehydration of (2R,3R)-2,3-dihydroxy-3-methylpentanoate (2,3-dihydroxy-3-methylvalerate) into 2-oxo-3-methylpentanoate (2-oxo-3-methylvalerate) and of (2R)-2,3-dihydroxy-3-methylbutanoate (2,3-dihydroxyisovalerate) into 2-oxo-3-methylbutanoate (2-oxoisovalerate), the penultimate precursor to L-isoleucine and L-valine, respectively.</text>
</comment>
<comment type="catalytic activity">
    <reaction evidence="1">
        <text>(2R)-2,3-dihydroxy-3-methylbutanoate = 3-methyl-2-oxobutanoate + H2O</text>
        <dbReference type="Rhea" id="RHEA:24809"/>
        <dbReference type="ChEBI" id="CHEBI:11851"/>
        <dbReference type="ChEBI" id="CHEBI:15377"/>
        <dbReference type="ChEBI" id="CHEBI:49072"/>
        <dbReference type="EC" id="4.2.1.9"/>
    </reaction>
    <physiologicalReaction direction="left-to-right" evidence="1">
        <dbReference type="Rhea" id="RHEA:24810"/>
    </physiologicalReaction>
</comment>
<comment type="catalytic activity">
    <reaction evidence="1">
        <text>(2R,3R)-2,3-dihydroxy-3-methylpentanoate = (S)-3-methyl-2-oxopentanoate + H2O</text>
        <dbReference type="Rhea" id="RHEA:27694"/>
        <dbReference type="ChEBI" id="CHEBI:15377"/>
        <dbReference type="ChEBI" id="CHEBI:35146"/>
        <dbReference type="ChEBI" id="CHEBI:49258"/>
        <dbReference type="EC" id="4.2.1.9"/>
    </reaction>
    <physiologicalReaction direction="left-to-right" evidence="1">
        <dbReference type="Rhea" id="RHEA:27695"/>
    </physiologicalReaction>
</comment>
<comment type="cofactor">
    <cofactor evidence="1">
        <name>[2Fe-2S] cluster</name>
        <dbReference type="ChEBI" id="CHEBI:190135"/>
    </cofactor>
    <text evidence="1">Binds 1 [2Fe-2S] cluster per subunit. This cluster acts as a Lewis acid cofactor.</text>
</comment>
<comment type="cofactor">
    <cofactor evidence="1">
        <name>Mg(2+)</name>
        <dbReference type="ChEBI" id="CHEBI:18420"/>
    </cofactor>
</comment>
<comment type="pathway">
    <text evidence="1">Amino-acid biosynthesis; L-isoleucine biosynthesis; L-isoleucine from 2-oxobutanoate: step 3/4.</text>
</comment>
<comment type="pathway">
    <text evidence="1">Amino-acid biosynthesis; L-valine biosynthesis; L-valine from pyruvate: step 3/4.</text>
</comment>
<comment type="subunit">
    <text evidence="1">Homodimer.</text>
</comment>
<comment type="similarity">
    <text evidence="1">Belongs to the IlvD/Edd family.</text>
</comment>
<keyword id="KW-0001">2Fe-2S</keyword>
<keyword id="KW-0028">Amino-acid biosynthesis</keyword>
<keyword id="KW-0100">Branched-chain amino acid biosynthesis</keyword>
<keyword id="KW-0408">Iron</keyword>
<keyword id="KW-0411">Iron-sulfur</keyword>
<keyword id="KW-0456">Lyase</keyword>
<keyword id="KW-0460">Magnesium</keyword>
<keyword id="KW-0479">Metal-binding</keyword>
<evidence type="ECO:0000255" key="1">
    <source>
        <dbReference type="HAMAP-Rule" id="MF_00012"/>
    </source>
</evidence>
<sequence length="613" mass="67233">MPKYRSSTTTQGRNMAGARSLWKATGMTDLDFKKPIIAVVNSFTEFVPGHIHLRNLGKLISSEIKLTGGVAKEFNTIAIDDGIAMGHSGMLYSLPSRELIADSIEYMINAHCADAMICISNCDKITPGMLMAALRLNIPCIFISGGPMESGKIFINEKEIKIDLIDAIKYSADPNSADDLVNQIEDSSCPTCGSCSGLFTANSMNCLTEALGLSLPGNGTLLATHVDRKKLFIQAGRLIVKITKDYYKNNNENLLPRNIASRQSFLNAMSLDIAMGGSTNTILHLLAIAKEGNIDFTMSDIDSLSKKVPHLCKISPNSTTYHMEDFHRAGGVMGLLAELNRINLLNKNINNVLGLNLETTLNIYDILTTKDKNIINMFRAGPFGKKTIIPFTQSYRWPKLDKDRQKGCIRSYEFAFSNDGGLAILYGNIAKNGCVVKTAGVKKDNLIFTGNAIVFESQEDAVRAILEGKIQKGHVIVIRYEGPKGGPGMQEMLYPTTYLKSMGLDQHCALITDGRFSGGTSGLSIGHISPEAASKGNIALIKNSDCININIPDRIIHLDITNDELLLRIENENKKGSLSYTPLYRQRYVSPALKMYAFFAMSADKGAVRKIRF</sequence>
<accession>Q9RQ48</accession>
<reference key="1">
    <citation type="journal article" date="1999" name="Mol. Biol. Evol.">
        <title>Sequence evolution in bacterial endosymbionts having extreme base compositions.</title>
        <authorList>
            <person name="Clark M.A."/>
            <person name="Moran N.A."/>
            <person name="Baumann P."/>
        </authorList>
    </citation>
    <scope>NUCLEOTIDE SEQUENCE [GENOMIC DNA]</scope>
</reference>
<name>ILVD_BUCMH</name>
<feature type="chain" id="PRO_0000103450" description="Dihydroxy-acid dehydratase">
    <location>
        <begin position="1"/>
        <end position="613"/>
    </location>
</feature>
<feature type="active site" description="Proton acceptor" evidence="1">
    <location>
        <position position="517"/>
    </location>
</feature>
<feature type="binding site" evidence="1">
    <location>
        <position position="81"/>
    </location>
    <ligand>
        <name>Mg(2+)</name>
        <dbReference type="ChEBI" id="CHEBI:18420"/>
    </ligand>
</feature>
<feature type="binding site" evidence="1">
    <location>
        <position position="122"/>
    </location>
    <ligand>
        <name>[2Fe-2S] cluster</name>
        <dbReference type="ChEBI" id="CHEBI:190135"/>
    </ligand>
</feature>
<feature type="binding site" evidence="1">
    <location>
        <position position="123"/>
    </location>
    <ligand>
        <name>Mg(2+)</name>
        <dbReference type="ChEBI" id="CHEBI:18420"/>
    </ligand>
</feature>
<feature type="binding site" description="via carbamate group" evidence="1">
    <location>
        <position position="124"/>
    </location>
    <ligand>
        <name>Mg(2+)</name>
        <dbReference type="ChEBI" id="CHEBI:18420"/>
    </ligand>
</feature>
<feature type="binding site" evidence="1">
    <location>
        <position position="195"/>
    </location>
    <ligand>
        <name>[2Fe-2S] cluster</name>
        <dbReference type="ChEBI" id="CHEBI:190135"/>
    </ligand>
</feature>
<feature type="binding site" evidence="1">
    <location>
        <position position="491"/>
    </location>
    <ligand>
        <name>Mg(2+)</name>
        <dbReference type="ChEBI" id="CHEBI:18420"/>
    </ligand>
</feature>
<feature type="modified residue" description="N6-carboxylysine" evidence="1">
    <location>
        <position position="124"/>
    </location>
</feature>
<dbReference type="EC" id="4.2.1.9" evidence="1"/>
<dbReference type="EMBL" id="AF130814">
    <property type="protein sequence ID" value="AAF13806.1"/>
    <property type="molecule type" value="Genomic_DNA"/>
</dbReference>
<dbReference type="SMR" id="Q9RQ48"/>
<dbReference type="UniPathway" id="UPA00047">
    <property type="reaction ID" value="UER00057"/>
</dbReference>
<dbReference type="UniPathway" id="UPA00049">
    <property type="reaction ID" value="UER00061"/>
</dbReference>
<dbReference type="GO" id="GO:0005829">
    <property type="term" value="C:cytosol"/>
    <property type="evidence" value="ECO:0007669"/>
    <property type="project" value="TreeGrafter"/>
</dbReference>
<dbReference type="GO" id="GO:0051537">
    <property type="term" value="F:2 iron, 2 sulfur cluster binding"/>
    <property type="evidence" value="ECO:0007669"/>
    <property type="project" value="UniProtKB-UniRule"/>
</dbReference>
<dbReference type="GO" id="GO:0004160">
    <property type="term" value="F:dihydroxy-acid dehydratase activity"/>
    <property type="evidence" value="ECO:0007669"/>
    <property type="project" value="UniProtKB-UniRule"/>
</dbReference>
<dbReference type="GO" id="GO:0000287">
    <property type="term" value="F:magnesium ion binding"/>
    <property type="evidence" value="ECO:0007669"/>
    <property type="project" value="UniProtKB-UniRule"/>
</dbReference>
<dbReference type="GO" id="GO:0009097">
    <property type="term" value="P:isoleucine biosynthetic process"/>
    <property type="evidence" value="ECO:0007669"/>
    <property type="project" value="UniProtKB-UniRule"/>
</dbReference>
<dbReference type="GO" id="GO:0009099">
    <property type="term" value="P:L-valine biosynthetic process"/>
    <property type="evidence" value="ECO:0007669"/>
    <property type="project" value="UniProtKB-UniRule"/>
</dbReference>
<dbReference type="FunFam" id="3.50.30.80:FF:000001">
    <property type="entry name" value="Dihydroxy-acid dehydratase"/>
    <property type="match status" value="1"/>
</dbReference>
<dbReference type="Gene3D" id="3.50.30.80">
    <property type="entry name" value="IlvD/EDD C-terminal domain-like"/>
    <property type="match status" value="1"/>
</dbReference>
<dbReference type="HAMAP" id="MF_00012">
    <property type="entry name" value="IlvD"/>
    <property type="match status" value="1"/>
</dbReference>
<dbReference type="InterPro" id="IPR042096">
    <property type="entry name" value="Dihydro-acid_dehy_C"/>
</dbReference>
<dbReference type="InterPro" id="IPR004404">
    <property type="entry name" value="DihydroxyA_deHydtase"/>
</dbReference>
<dbReference type="InterPro" id="IPR020558">
    <property type="entry name" value="DiOHA_6PGluconate_deHydtase_CS"/>
</dbReference>
<dbReference type="InterPro" id="IPR056740">
    <property type="entry name" value="ILV_EDD_C"/>
</dbReference>
<dbReference type="InterPro" id="IPR000581">
    <property type="entry name" value="ILV_EDD_N"/>
</dbReference>
<dbReference type="InterPro" id="IPR037237">
    <property type="entry name" value="IlvD/EDD_N"/>
</dbReference>
<dbReference type="NCBIfam" id="TIGR00110">
    <property type="entry name" value="ilvD"/>
    <property type="match status" value="1"/>
</dbReference>
<dbReference type="NCBIfam" id="NF009103">
    <property type="entry name" value="PRK12448.1"/>
    <property type="match status" value="1"/>
</dbReference>
<dbReference type="PANTHER" id="PTHR43661">
    <property type="entry name" value="D-XYLONATE DEHYDRATASE"/>
    <property type="match status" value="1"/>
</dbReference>
<dbReference type="PANTHER" id="PTHR43661:SF3">
    <property type="entry name" value="D-XYLONATE DEHYDRATASE YAGF-RELATED"/>
    <property type="match status" value="1"/>
</dbReference>
<dbReference type="Pfam" id="PF24877">
    <property type="entry name" value="ILV_EDD_C"/>
    <property type="match status" value="1"/>
</dbReference>
<dbReference type="Pfam" id="PF00920">
    <property type="entry name" value="ILVD_EDD_N"/>
    <property type="match status" value="1"/>
</dbReference>
<dbReference type="SUPFAM" id="SSF143975">
    <property type="entry name" value="IlvD/EDD N-terminal domain-like"/>
    <property type="match status" value="1"/>
</dbReference>
<dbReference type="SUPFAM" id="SSF52016">
    <property type="entry name" value="LeuD/IlvD-like"/>
    <property type="match status" value="1"/>
</dbReference>
<dbReference type="PROSITE" id="PS00886">
    <property type="entry name" value="ILVD_EDD_1"/>
    <property type="match status" value="1"/>
</dbReference>
<dbReference type="PROSITE" id="PS00887">
    <property type="entry name" value="ILVD_EDD_2"/>
    <property type="match status" value="1"/>
</dbReference>
<organism>
    <name type="scientific">Buchnera aphidicola subsp. Melaphis rhois</name>
    <dbReference type="NCBI Taxonomy" id="118103"/>
    <lineage>
        <taxon>Bacteria</taxon>
        <taxon>Pseudomonadati</taxon>
        <taxon>Pseudomonadota</taxon>
        <taxon>Gammaproteobacteria</taxon>
        <taxon>Enterobacterales</taxon>
        <taxon>Erwiniaceae</taxon>
        <taxon>Buchnera</taxon>
    </lineage>
</organism>
<protein>
    <recommendedName>
        <fullName evidence="1">Dihydroxy-acid dehydratase</fullName>
        <shortName evidence="1">DAD</shortName>
        <ecNumber evidence="1">4.2.1.9</ecNumber>
    </recommendedName>
</protein>